<proteinExistence type="evidence at transcript level"/>
<protein>
    <recommendedName>
        <fullName>snRNA-activating protein complex subunit 3</fullName>
        <shortName>SNAPc subunit 3</shortName>
    </recommendedName>
    <alternativeName>
        <fullName>Small nuclear RNA-activating complex polypeptide 3</fullName>
    </alternativeName>
</protein>
<organism>
    <name type="scientific">Bos taurus</name>
    <name type="common">Bovine</name>
    <dbReference type="NCBI Taxonomy" id="9913"/>
    <lineage>
        <taxon>Eukaryota</taxon>
        <taxon>Metazoa</taxon>
        <taxon>Chordata</taxon>
        <taxon>Craniata</taxon>
        <taxon>Vertebrata</taxon>
        <taxon>Euteleostomi</taxon>
        <taxon>Mammalia</taxon>
        <taxon>Eutheria</taxon>
        <taxon>Laurasiatheria</taxon>
        <taxon>Artiodactyla</taxon>
        <taxon>Ruminantia</taxon>
        <taxon>Pecora</taxon>
        <taxon>Bovidae</taxon>
        <taxon>Bovinae</taxon>
        <taxon>Bos</taxon>
    </lineage>
</organism>
<gene>
    <name type="primary">SNAPC3</name>
</gene>
<accession>Q5E9M5</accession>
<reference key="1">
    <citation type="journal article" date="2005" name="BMC Genomics">
        <title>Characterization of 954 bovine full-CDS cDNA sequences.</title>
        <authorList>
            <person name="Harhay G.P."/>
            <person name="Sonstegard T.S."/>
            <person name="Keele J.W."/>
            <person name="Heaton M.P."/>
            <person name="Clawson M.L."/>
            <person name="Snelling W.M."/>
            <person name="Wiedmann R.T."/>
            <person name="Van Tassell C.P."/>
            <person name="Smith T.P.L."/>
        </authorList>
    </citation>
    <scope>NUCLEOTIDE SEQUENCE [LARGE SCALE MRNA]</scope>
</reference>
<keyword id="KW-0238">DNA-binding</keyword>
<keyword id="KW-0539">Nucleus</keyword>
<keyword id="KW-1185">Reference proteome</keyword>
<keyword id="KW-0804">Transcription</keyword>
<keyword id="KW-0805">Transcription regulation</keyword>
<name>SNPC3_BOVIN</name>
<dbReference type="EMBL" id="BT020895">
    <property type="protein sequence ID" value="AAX08912.1"/>
    <property type="molecule type" value="mRNA"/>
</dbReference>
<dbReference type="SMR" id="Q5E9M5"/>
<dbReference type="FunCoup" id="Q5E9M5">
    <property type="interactions" value="3468"/>
</dbReference>
<dbReference type="STRING" id="9913.ENSBTAP00000066700"/>
<dbReference type="InParanoid" id="Q5E9M5"/>
<dbReference type="OrthoDB" id="46583at2759"/>
<dbReference type="Proteomes" id="UP000009136">
    <property type="component" value="Unplaced"/>
</dbReference>
<dbReference type="GO" id="GO:0005634">
    <property type="term" value="C:nucleus"/>
    <property type="evidence" value="ECO:0007669"/>
    <property type="project" value="UniProtKB-SubCell"/>
</dbReference>
<dbReference type="GO" id="GO:0019185">
    <property type="term" value="C:snRNA-activating protein complex"/>
    <property type="evidence" value="ECO:0000318"/>
    <property type="project" value="GO_Central"/>
</dbReference>
<dbReference type="GO" id="GO:0003681">
    <property type="term" value="F:bent DNA binding"/>
    <property type="evidence" value="ECO:0000318"/>
    <property type="project" value="GO_Central"/>
</dbReference>
<dbReference type="GO" id="GO:0001006">
    <property type="term" value="F:RNA polymerase III type 3 promoter sequence-specific DNA binding"/>
    <property type="evidence" value="ECO:0000318"/>
    <property type="project" value="GO_Central"/>
</dbReference>
<dbReference type="GO" id="GO:0042795">
    <property type="term" value="P:snRNA transcription by RNA polymerase II"/>
    <property type="evidence" value="ECO:0000318"/>
    <property type="project" value="GO_Central"/>
</dbReference>
<dbReference type="GO" id="GO:0042796">
    <property type="term" value="P:snRNA transcription by RNA polymerase III"/>
    <property type="evidence" value="ECO:0000318"/>
    <property type="project" value="GO_Central"/>
</dbReference>
<dbReference type="InterPro" id="IPR022042">
    <property type="entry name" value="snRNA-activating_su3"/>
</dbReference>
<dbReference type="PANTHER" id="PTHR13421">
    <property type="entry name" value="SNRNA-ACTIVATING PROTEIN COMPLEX SUBUNIT 3"/>
    <property type="match status" value="1"/>
</dbReference>
<dbReference type="PANTHER" id="PTHR13421:SF16">
    <property type="entry name" value="SNRNA-ACTIVATING PROTEIN COMPLEX SUBUNIT 3"/>
    <property type="match status" value="1"/>
</dbReference>
<dbReference type="Pfam" id="PF12251">
    <property type="entry name" value="SNAPC3"/>
    <property type="match status" value="1"/>
</dbReference>
<sequence>MAEGSRGGPACGRMEDRQDPAPSSGGCGFPEYELPELNTRAFHVGAFGELWRCRLRGKGDLSLKEPPAPAVPEGDTVADSGREDAAVARDLGCSLEAAAELRAVCGLDKLKCLEEGEDPEVIPENTDLVTLGVRKRLLEHRKETITIDRVCRQETFAYEMESHAMGKKPENPADMIEEGELILSVNILYPVIFHKHKEHKPYQTILVLGSQKLTELRDAICCVSDLQIGGEFSNTPDQAPEHISKDLYKSAFFYFEGTFYNDKRYPECRDLSRTIIEWSESHDRGYGKFQTAKMEDFTFNDLYIKLGFPYLYCHQGDCEHVVVITDIRLVHHDDCLDRTLYPLLIKKHWLWTRKCFVCKMYTARWVTNNDSFAPEDPCFFCDVCFRMLHYDSEGNKLGEFLAYPYVDPGTFN</sequence>
<evidence type="ECO:0000250" key="1"/>
<evidence type="ECO:0000256" key="2">
    <source>
        <dbReference type="SAM" id="MobiDB-lite"/>
    </source>
</evidence>
<evidence type="ECO:0000305" key="3"/>
<feature type="chain" id="PRO_0000072023" description="snRNA-activating protein complex subunit 3">
    <location>
        <begin position="1"/>
        <end position="412"/>
    </location>
</feature>
<feature type="region of interest" description="Disordered" evidence="2">
    <location>
        <begin position="1"/>
        <end position="28"/>
    </location>
</feature>
<feature type="compositionally biased region" description="Gly residues" evidence="2">
    <location>
        <begin position="1"/>
        <end position="10"/>
    </location>
</feature>
<comment type="function">
    <text evidence="1">Part of the SNAPc complex required for the transcription of both RNA polymerase II and III small-nuclear RNA genes. Binds to the proximal sequence element (PSE), a non-TATA-box basal promoter element common to these 2 types of genes. Recruits TBP and BRF2 to the U6 snRNA TATA box (By similarity).</text>
</comment>
<comment type="subunit">
    <text evidence="1">Part of the SNAPc complex composed of 5 subunits: SNAPC1, SNAPC2, SNAPC3, SNAPC4 and SNAPC5. SNAPC3 interacts with SNAPC1 (By similarity).</text>
</comment>
<comment type="subcellular location">
    <subcellularLocation>
        <location evidence="1">Nucleus</location>
    </subcellularLocation>
</comment>
<comment type="similarity">
    <text evidence="3">Belongs to the SNAPC3/SRD2 family.</text>
</comment>